<protein>
    <recommendedName>
        <fullName evidence="1">NAD(P)H-quinone oxidoreductase subunit 2 A, chloroplastic</fullName>
        <ecNumber evidence="1">7.1.1.-</ecNumber>
    </recommendedName>
    <alternativeName>
        <fullName evidence="1">NAD(P)H dehydrogenase, subunit 2 A</fullName>
    </alternativeName>
    <alternativeName>
        <fullName evidence="1">NADH-plastoquinone oxidoreductase subunit 2 A</fullName>
    </alternativeName>
</protein>
<comment type="function">
    <text evidence="1">NDH shuttles electrons from NAD(P)H:plastoquinone, via FMN and iron-sulfur (Fe-S) centers, to quinones in the photosynthetic chain and possibly in a chloroplast respiratory chain. The immediate electron acceptor for the enzyme in this species is believed to be plastoquinone. Couples the redox reaction to proton translocation, and thus conserves the redox energy in a proton gradient.</text>
</comment>
<comment type="catalytic activity">
    <reaction evidence="1">
        <text>a plastoquinone + NADH + (n+1) H(+)(in) = a plastoquinol + NAD(+) + n H(+)(out)</text>
        <dbReference type="Rhea" id="RHEA:42608"/>
        <dbReference type="Rhea" id="RHEA-COMP:9561"/>
        <dbReference type="Rhea" id="RHEA-COMP:9562"/>
        <dbReference type="ChEBI" id="CHEBI:15378"/>
        <dbReference type="ChEBI" id="CHEBI:17757"/>
        <dbReference type="ChEBI" id="CHEBI:57540"/>
        <dbReference type="ChEBI" id="CHEBI:57945"/>
        <dbReference type="ChEBI" id="CHEBI:62192"/>
    </reaction>
</comment>
<comment type="catalytic activity">
    <reaction evidence="1">
        <text>a plastoquinone + NADPH + (n+1) H(+)(in) = a plastoquinol + NADP(+) + n H(+)(out)</text>
        <dbReference type="Rhea" id="RHEA:42612"/>
        <dbReference type="Rhea" id="RHEA-COMP:9561"/>
        <dbReference type="Rhea" id="RHEA-COMP:9562"/>
        <dbReference type="ChEBI" id="CHEBI:15378"/>
        <dbReference type="ChEBI" id="CHEBI:17757"/>
        <dbReference type="ChEBI" id="CHEBI:57783"/>
        <dbReference type="ChEBI" id="CHEBI:58349"/>
        <dbReference type="ChEBI" id="CHEBI:62192"/>
    </reaction>
</comment>
<comment type="subunit">
    <text evidence="1">NDH is composed of at least 16 different subunits, 5 of which are encoded in the nucleus.</text>
</comment>
<comment type="subcellular location">
    <subcellularLocation>
        <location evidence="1">Plastid</location>
        <location evidence="1">Chloroplast thylakoid membrane</location>
        <topology evidence="1">Multi-pass membrane protein</topology>
    </subcellularLocation>
</comment>
<comment type="similarity">
    <text evidence="1">Belongs to the complex I subunit 2 family.</text>
</comment>
<gene>
    <name evidence="1" type="primary">ndhB1</name>
</gene>
<keyword id="KW-0150">Chloroplast</keyword>
<keyword id="KW-0472">Membrane</keyword>
<keyword id="KW-0520">NAD</keyword>
<keyword id="KW-0521">NADP</keyword>
<keyword id="KW-0934">Plastid</keyword>
<keyword id="KW-0618">Plastoquinone</keyword>
<keyword id="KW-0874">Quinone</keyword>
<keyword id="KW-1185">Reference proteome</keyword>
<keyword id="KW-0793">Thylakoid</keyword>
<keyword id="KW-1278">Translocase</keyword>
<keyword id="KW-0812">Transmembrane</keyword>
<keyword id="KW-1133">Transmembrane helix</keyword>
<keyword id="KW-0813">Transport</keyword>
<name>NU2C1_SOLTU</name>
<reference key="1">
    <citation type="journal article" date="2006" name="Plant Cell Rep.">
        <title>The complete chloroplast genome sequences of Solanum tuberosum and comparative analysis with Solanaceae species identified the presence of a 241-bp deletion in cultivated potato chloroplast DNA sequence.</title>
        <authorList>
            <person name="Chung H.-J."/>
            <person name="Jung J.D."/>
            <person name="Park H.-W."/>
            <person name="Kim J.-H."/>
            <person name="Cha H.W."/>
            <person name="Min S.R."/>
            <person name="Jeong W.-J."/>
            <person name="Liu J.R."/>
        </authorList>
    </citation>
    <scope>NUCLEOTIDE SEQUENCE [LARGE SCALE GENOMIC DNA]</scope>
    <source>
        <strain>cv. Desiree</strain>
    </source>
</reference>
<reference key="2">
    <citation type="submission" date="2006-02" db="EMBL/GenBank/DDBJ databases">
        <title>Complete chloroplast genome sequences of Solanum tuberosum cultivar Desiree and comparative analyses with other Solanaceae genomes.</title>
        <authorList>
            <person name="Gargano D."/>
            <person name="Scotti N."/>
            <person name="Vezzi A."/>
            <person name="Bilardi A."/>
            <person name="Valle G."/>
            <person name="Grillo S."/>
            <person name="Cardi T."/>
        </authorList>
    </citation>
    <scope>NUCLEOTIDE SEQUENCE [LARGE SCALE GENOMIC DNA]</scope>
    <source>
        <strain>cv. Desiree</strain>
    </source>
</reference>
<accession>P0CD48</accession>
<accession>Q27RY9</accession>
<accession>Q2VEC1</accession>
<evidence type="ECO:0000255" key="1">
    <source>
        <dbReference type="HAMAP-Rule" id="MF_00445"/>
    </source>
</evidence>
<feature type="chain" id="PRO_0000225350" description="NAD(P)H-quinone oxidoreductase subunit 2 A, chloroplastic">
    <location>
        <begin position="1"/>
        <end position="510"/>
    </location>
</feature>
<feature type="transmembrane region" description="Helical" evidence="1">
    <location>
        <begin position="24"/>
        <end position="44"/>
    </location>
</feature>
<feature type="transmembrane region" description="Helical" evidence="1">
    <location>
        <begin position="57"/>
        <end position="77"/>
    </location>
</feature>
<feature type="transmembrane region" description="Helical" evidence="1">
    <location>
        <begin position="99"/>
        <end position="119"/>
    </location>
</feature>
<feature type="transmembrane region" description="Helical" evidence="1">
    <location>
        <begin position="124"/>
        <end position="144"/>
    </location>
</feature>
<feature type="transmembrane region" description="Helical" evidence="1">
    <location>
        <begin position="149"/>
        <end position="169"/>
    </location>
</feature>
<feature type="transmembrane region" description="Helical" evidence="1">
    <location>
        <begin position="183"/>
        <end position="203"/>
    </location>
</feature>
<feature type="transmembrane region" description="Helical" evidence="1">
    <location>
        <begin position="227"/>
        <end position="247"/>
    </location>
</feature>
<feature type="transmembrane region" description="Helical" evidence="1">
    <location>
        <begin position="295"/>
        <end position="315"/>
    </location>
</feature>
<feature type="transmembrane region" description="Helical" evidence="1">
    <location>
        <begin position="323"/>
        <end position="343"/>
    </location>
</feature>
<feature type="transmembrane region" description="Helical" evidence="1">
    <location>
        <begin position="354"/>
        <end position="374"/>
    </location>
</feature>
<feature type="transmembrane region" description="Helical" evidence="1">
    <location>
        <begin position="395"/>
        <end position="415"/>
    </location>
</feature>
<feature type="transmembrane region" description="Helical" evidence="1">
    <location>
        <begin position="418"/>
        <end position="438"/>
    </location>
</feature>
<feature type="transmembrane region" description="Helical" evidence="1">
    <location>
        <begin position="484"/>
        <end position="504"/>
    </location>
</feature>
<sequence length="510" mass="56627">MIWHVQNENFILDSTRIFMKAFHLLLFDGSLIFPECILIFGLILLLMIDSTSDQKDIPWLYFISSTSLVLSITALLFRWREEPMISFSGNFQTNNFNEIFQFLILLCSTLCIPLSVEYIECTEMAITEFLLFVLTATLGGMFLCGANDLITIFVAPECFSLCSYLLSGYTKKDVRSNEATMKYLLMGGASSSILVHGFSWLYGSSGGEIELQEIVNGLINTQMYNSPGISIALIFITVGIGFKLSPAPSHQWTPDVYEGSPTPVVAFLSVTSKVAASASATRIFDIPFYFSSNEWHLLLEILAILSMILGNLIAITQTSMKRMLAYSSIGQIGYVIIGIIVGDSNDGYASMITYMLFYISMNLGTFACIVLFGLRTGTDNIRDYAGLYTKDPFLALSLALCLLSLGGLPPLAGFFGKLYLFWCGWQAGLYFLVLIGLLTSVVSIYYYLKIIKLLMTGRNQEITPHVRNYRRSPLRSNNSIELSMIVCVIASTIPGISMNPIIAIAQDSLF</sequence>
<geneLocation type="chloroplast"/>
<dbReference type="EC" id="7.1.1.-" evidence="1"/>
<dbReference type="EMBL" id="DQ231562">
    <property type="protein sequence ID" value="ABB90083.1"/>
    <property type="molecule type" value="Genomic_DNA"/>
</dbReference>
<dbReference type="EMBL" id="DQ386163">
    <property type="protein sequence ID" value="ABD47101.1"/>
    <property type="molecule type" value="Genomic_DNA"/>
</dbReference>
<dbReference type="SMR" id="P0CD48"/>
<dbReference type="FunCoup" id="P0CD48">
    <property type="interactions" value="19"/>
</dbReference>
<dbReference type="STRING" id="4113.P0CD48"/>
<dbReference type="KEGG" id="sot:4099891"/>
<dbReference type="KEGG" id="sot:4099922"/>
<dbReference type="InParanoid" id="P0CD48"/>
<dbReference type="OrthoDB" id="1712451at2759"/>
<dbReference type="Proteomes" id="UP000011115">
    <property type="component" value="Unassembled WGS sequence"/>
</dbReference>
<dbReference type="ExpressionAtlas" id="P0CD48">
    <property type="expression patterns" value="baseline"/>
</dbReference>
<dbReference type="GO" id="GO:0009535">
    <property type="term" value="C:chloroplast thylakoid membrane"/>
    <property type="evidence" value="ECO:0007669"/>
    <property type="project" value="UniProtKB-SubCell"/>
</dbReference>
<dbReference type="GO" id="GO:0008137">
    <property type="term" value="F:NADH dehydrogenase (ubiquinone) activity"/>
    <property type="evidence" value="ECO:0007669"/>
    <property type="project" value="InterPro"/>
</dbReference>
<dbReference type="GO" id="GO:0048038">
    <property type="term" value="F:quinone binding"/>
    <property type="evidence" value="ECO:0007669"/>
    <property type="project" value="UniProtKB-KW"/>
</dbReference>
<dbReference type="GO" id="GO:0042773">
    <property type="term" value="P:ATP synthesis coupled electron transport"/>
    <property type="evidence" value="ECO:0007669"/>
    <property type="project" value="InterPro"/>
</dbReference>
<dbReference type="GO" id="GO:0019684">
    <property type="term" value="P:photosynthesis, light reaction"/>
    <property type="evidence" value="ECO:0007669"/>
    <property type="project" value="UniProtKB-UniRule"/>
</dbReference>
<dbReference type="HAMAP" id="MF_00445">
    <property type="entry name" value="NDH1_NuoN_1"/>
    <property type="match status" value="1"/>
</dbReference>
<dbReference type="InterPro" id="IPR010096">
    <property type="entry name" value="NADH-Q_OxRdtase_suN/2"/>
</dbReference>
<dbReference type="InterPro" id="IPR001750">
    <property type="entry name" value="ND/Mrp_TM"/>
</dbReference>
<dbReference type="InterPro" id="IPR045693">
    <property type="entry name" value="Ndh2_N"/>
</dbReference>
<dbReference type="NCBIfam" id="TIGR01770">
    <property type="entry name" value="NDH_I_N"/>
    <property type="match status" value="1"/>
</dbReference>
<dbReference type="NCBIfam" id="NF002701">
    <property type="entry name" value="PRK02504.1"/>
    <property type="match status" value="1"/>
</dbReference>
<dbReference type="PANTHER" id="PTHR22773">
    <property type="entry name" value="NADH DEHYDROGENASE"/>
    <property type="match status" value="1"/>
</dbReference>
<dbReference type="Pfam" id="PF19530">
    <property type="entry name" value="Ndh2_N"/>
    <property type="match status" value="1"/>
</dbReference>
<dbReference type="Pfam" id="PF00361">
    <property type="entry name" value="Proton_antipo_M"/>
    <property type="match status" value="1"/>
</dbReference>
<dbReference type="PRINTS" id="PR01434">
    <property type="entry name" value="NADHDHGNASE5"/>
</dbReference>
<organism>
    <name type="scientific">Solanum tuberosum</name>
    <name type="common">Potato</name>
    <dbReference type="NCBI Taxonomy" id="4113"/>
    <lineage>
        <taxon>Eukaryota</taxon>
        <taxon>Viridiplantae</taxon>
        <taxon>Streptophyta</taxon>
        <taxon>Embryophyta</taxon>
        <taxon>Tracheophyta</taxon>
        <taxon>Spermatophyta</taxon>
        <taxon>Magnoliopsida</taxon>
        <taxon>eudicotyledons</taxon>
        <taxon>Gunneridae</taxon>
        <taxon>Pentapetalae</taxon>
        <taxon>asterids</taxon>
        <taxon>lamiids</taxon>
        <taxon>Solanales</taxon>
        <taxon>Solanaceae</taxon>
        <taxon>Solanoideae</taxon>
        <taxon>Solaneae</taxon>
        <taxon>Solanum</taxon>
    </lineage>
</organism>
<proteinExistence type="inferred from homology"/>